<accession>Q4QY38</accession>
<accession>A1L4A4</accession>
<dbReference type="EMBL" id="DQ012024">
    <property type="protein sequence ID" value="AAY59760.1"/>
    <property type="molecule type" value="mRNA"/>
</dbReference>
<dbReference type="EMBL" id="AY621331">
    <property type="protein sequence ID" value="AAT51870.1"/>
    <property type="molecule type" value="mRNA"/>
</dbReference>
<dbReference type="EMBL" id="BC130461">
    <property type="protein sequence ID" value="AAI30462.1"/>
    <property type="molecule type" value="mRNA"/>
</dbReference>
<dbReference type="EMBL" id="BC130463">
    <property type="protein sequence ID" value="AAI30464.1"/>
    <property type="molecule type" value="mRNA"/>
</dbReference>
<dbReference type="CCDS" id="CCDS34847.1"/>
<dbReference type="RefSeq" id="NP_001289624.1">
    <property type="nucleotide sequence ID" value="NM_001302695.2"/>
</dbReference>
<dbReference type="RefSeq" id="XP_016869213.1">
    <property type="nucleotide sequence ID" value="XM_017013724.1"/>
</dbReference>
<dbReference type="RefSeq" id="XP_016885980.1">
    <property type="nucleotide sequence ID" value="XM_017030491.1"/>
</dbReference>
<dbReference type="RefSeq" id="XP_016885981.1">
    <property type="nucleotide sequence ID" value="XM_017030492.1"/>
</dbReference>
<dbReference type="RefSeq" id="XP_016885982.1">
    <property type="nucleotide sequence ID" value="XM_017030493.1"/>
</dbReference>
<dbReference type="RefSeq" id="XP_047278031.1">
    <property type="nucleotide sequence ID" value="XM_047422075.1"/>
</dbReference>
<dbReference type="RefSeq" id="XP_054188226.1">
    <property type="nucleotide sequence ID" value="XM_054332251.1"/>
</dbReference>
<dbReference type="RefSeq" id="XP_054216934.1">
    <property type="nucleotide sequence ID" value="XM_054360959.1"/>
</dbReference>
<dbReference type="RefSeq" id="XP_054216935.1">
    <property type="nucleotide sequence ID" value="XM_054360960.1"/>
</dbReference>
<dbReference type="SMR" id="Q4QY38"/>
<dbReference type="STRING" id="9606.ENSP00000435010"/>
<dbReference type="BioMuta" id="DEFB134"/>
<dbReference type="DMDM" id="74762871"/>
<dbReference type="PaxDb" id="9606-ENSP00000435010"/>
<dbReference type="Antibodypedia" id="50844">
    <property type="antibodies" value="3 antibodies from 3 providers"/>
</dbReference>
<dbReference type="DNASU" id="613211"/>
<dbReference type="Ensembl" id="ENST00000382205.6">
    <property type="protein sequence ID" value="ENSP00000371640.4"/>
    <property type="gene ID" value="ENSG00000205882.9"/>
</dbReference>
<dbReference type="Ensembl" id="ENST00000526438.6">
    <property type="protein sequence ID" value="ENSP00000435010.1"/>
    <property type="gene ID" value="ENSG00000205882.9"/>
</dbReference>
<dbReference type="Ensembl" id="ENST00000645046.2">
    <property type="protein sequence ID" value="ENSP00000494837.1"/>
    <property type="gene ID" value="ENSG00000284754.2"/>
</dbReference>
<dbReference type="Ensembl" id="ENST00000646417.2">
    <property type="protein sequence ID" value="ENSP00000495848.1"/>
    <property type="gene ID" value="ENSG00000284754.2"/>
</dbReference>
<dbReference type="GeneID" id="613211"/>
<dbReference type="KEGG" id="hsa:613211"/>
<dbReference type="MANE-Select" id="ENST00000382205.6">
    <property type="protein sequence ID" value="ENSP00000371640.4"/>
    <property type="RefSeq nucleotide sequence ID" value="NM_001302695.2"/>
    <property type="RefSeq protein sequence ID" value="NP_001289624.1"/>
</dbReference>
<dbReference type="UCSC" id="uc011kxn.3">
    <property type="organism name" value="human"/>
</dbReference>
<dbReference type="AGR" id="HGNC:32399"/>
<dbReference type="CTD" id="613211"/>
<dbReference type="GeneCards" id="DEFB134"/>
<dbReference type="HGNC" id="HGNC:32399">
    <property type="gene designation" value="DEFB134"/>
</dbReference>
<dbReference type="HPA" id="ENSG00000205882">
    <property type="expression patterns" value="Tissue enriched (epididymis)"/>
</dbReference>
<dbReference type="neXtProt" id="NX_Q4QY38"/>
<dbReference type="OpenTargets" id="ENSG00000205882"/>
<dbReference type="PharmGKB" id="PA164718735"/>
<dbReference type="VEuPathDB" id="HostDB:ENSG00000205882"/>
<dbReference type="eggNOG" id="ENOG502TM3N">
    <property type="taxonomic scope" value="Eukaryota"/>
</dbReference>
<dbReference type="GeneTree" id="ENSGT00400000024366"/>
<dbReference type="HOGENOM" id="CLU_2830492_0_0_1"/>
<dbReference type="InParanoid" id="Q4QY38"/>
<dbReference type="OMA" id="KCYGNGI"/>
<dbReference type="OrthoDB" id="9832741at2759"/>
<dbReference type="PAN-GO" id="Q4QY38">
    <property type="GO annotations" value="0 GO annotations based on evolutionary models"/>
</dbReference>
<dbReference type="PhylomeDB" id="Q4QY38"/>
<dbReference type="PathwayCommons" id="Q4QY38"/>
<dbReference type="Reactome" id="R-HSA-1461957">
    <property type="pathway name" value="Beta defensins"/>
</dbReference>
<dbReference type="Reactome" id="R-HSA-1461973">
    <property type="pathway name" value="Defensins"/>
</dbReference>
<dbReference type="BioGRID-ORCS" id="613211">
    <property type="hits" value="9 hits in 789 CRISPR screens"/>
</dbReference>
<dbReference type="Pharos" id="Q4QY38">
    <property type="development level" value="Tdark"/>
</dbReference>
<dbReference type="PRO" id="PR:Q4QY38"/>
<dbReference type="Proteomes" id="UP000005640">
    <property type="component" value="Chromosome 8"/>
</dbReference>
<dbReference type="RNAct" id="Q4QY38">
    <property type="molecule type" value="protein"/>
</dbReference>
<dbReference type="Bgee" id="ENSG00000205882">
    <property type="expression patterns" value="Expressed in left testis and 41 other cell types or tissues"/>
</dbReference>
<dbReference type="GO" id="GO:0005576">
    <property type="term" value="C:extracellular region"/>
    <property type="evidence" value="ECO:0007669"/>
    <property type="project" value="UniProtKB-SubCell"/>
</dbReference>
<dbReference type="GO" id="GO:0042742">
    <property type="term" value="P:defense response to bacterium"/>
    <property type="evidence" value="ECO:0007669"/>
    <property type="project" value="UniProtKB-KW"/>
</dbReference>
<dbReference type="GO" id="GO:0045087">
    <property type="term" value="P:innate immune response"/>
    <property type="evidence" value="ECO:0007669"/>
    <property type="project" value="InterPro"/>
</dbReference>
<dbReference type="InterPro" id="IPR025933">
    <property type="entry name" value="Beta_defensin_dom"/>
</dbReference>
<dbReference type="Pfam" id="PF13841">
    <property type="entry name" value="Defensin_beta_2"/>
    <property type="match status" value="1"/>
</dbReference>
<protein>
    <recommendedName>
        <fullName>Beta-defensin 134</fullName>
    </recommendedName>
    <alternativeName>
        <fullName>Defensin, beta 134</fullName>
    </alternativeName>
</protein>
<name>DB134_HUMAN</name>
<feature type="signal peptide" evidence="2">
    <location>
        <begin position="1"/>
        <end position="19"/>
    </location>
</feature>
<feature type="chain" id="PRO_0000045360" description="Beta-defensin 134">
    <location>
        <begin position="20"/>
        <end position="66"/>
    </location>
</feature>
<feature type="disulfide bond" evidence="1">
    <location>
        <begin position="32"/>
        <end position="58"/>
    </location>
</feature>
<feature type="disulfide bond" evidence="1">
    <location>
        <begin position="38"/>
        <end position="52"/>
    </location>
</feature>
<feature type="disulfide bond" evidence="1">
    <location>
        <begin position="42"/>
        <end position="59"/>
    </location>
</feature>
<reference key="1">
    <citation type="journal article" date="2005" name="Physiol. Genomics">
        <title>Cross-species analysis of the mammalian beta-defensin gene family: presence of syntenic gene clusters and preferential expression in the male reproductive tract.</title>
        <authorList>
            <person name="Patil A.A."/>
            <person name="Cai Y."/>
            <person name="Sang Y."/>
            <person name="Blecha F."/>
            <person name="Zhang G."/>
        </authorList>
    </citation>
    <scope>NUCLEOTIDE SEQUENCE [MRNA]</scope>
</reference>
<reference key="2">
    <citation type="submission" date="2004-05" db="EMBL/GenBank/DDBJ databases">
        <title>Genome-wide analysis of rat beta-defensins: evidence for the existence of four syntenic defensin gene clusters in mammals.</title>
        <authorList>
            <person name="Patil A."/>
            <person name="Zhang G."/>
        </authorList>
    </citation>
    <scope>NUCLEOTIDE SEQUENCE [MRNA]</scope>
</reference>
<reference key="3">
    <citation type="journal article" date="2004" name="Genome Res.">
        <title>The status, quality, and expansion of the NIH full-length cDNA project: the Mammalian Gene Collection (MGC).</title>
        <authorList>
            <consortium name="The MGC Project Team"/>
        </authorList>
    </citation>
    <scope>NUCLEOTIDE SEQUENCE [LARGE SCALE MRNA]</scope>
</reference>
<proteinExistence type="inferred from homology"/>
<comment type="function">
    <text evidence="3">Has antibacterial activity.</text>
</comment>
<comment type="subcellular location">
    <subcellularLocation>
        <location evidence="3">Secreted</location>
    </subcellularLocation>
</comment>
<comment type="similarity">
    <text evidence="3">Belongs to the beta-defensin family.</text>
</comment>
<comment type="caution">
    <text evidence="3">Was termed (Ref.2) DEFB135.</text>
</comment>
<keyword id="KW-0044">Antibiotic</keyword>
<keyword id="KW-0929">Antimicrobial</keyword>
<keyword id="KW-0211">Defensin</keyword>
<keyword id="KW-1015">Disulfide bond</keyword>
<keyword id="KW-1185">Reference proteome</keyword>
<keyword id="KW-0964">Secreted</keyword>
<keyword id="KW-0732">Signal</keyword>
<sequence>MKPLLVVFVFLFLWDPVLAGINSLSSEMHKKCYKNGICRLECYESEMLVAYCMFQLECCVKGNPAP</sequence>
<evidence type="ECO:0000250" key="1"/>
<evidence type="ECO:0000255" key="2"/>
<evidence type="ECO:0000305" key="3"/>
<gene>
    <name type="primary">DEFB134</name>
</gene>
<organism>
    <name type="scientific">Homo sapiens</name>
    <name type="common">Human</name>
    <dbReference type="NCBI Taxonomy" id="9606"/>
    <lineage>
        <taxon>Eukaryota</taxon>
        <taxon>Metazoa</taxon>
        <taxon>Chordata</taxon>
        <taxon>Craniata</taxon>
        <taxon>Vertebrata</taxon>
        <taxon>Euteleostomi</taxon>
        <taxon>Mammalia</taxon>
        <taxon>Eutheria</taxon>
        <taxon>Euarchontoglires</taxon>
        <taxon>Primates</taxon>
        <taxon>Haplorrhini</taxon>
        <taxon>Catarrhini</taxon>
        <taxon>Hominidae</taxon>
        <taxon>Homo</taxon>
    </lineage>
</organism>